<name>MGR1_PICST</name>
<organism>
    <name type="scientific">Scheffersomyces stipitis (strain ATCC 58785 / CBS 6054 / NBRC 10063 / NRRL Y-11545)</name>
    <name type="common">Yeast</name>
    <name type="synonym">Pichia stipitis</name>
    <dbReference type="NCBI Taxonomy" id="322104"/>
    <lineage>
        <taxon>Eukaryota</taxon>
        <taxon>Fungi</taxon>
        <taxon>Dikarya</taxon>
        <taxon>Ascomycota</taxon>
        <taxon>Saccharomycotina</taxon>
        <taxon>Pichiomycetes</taxon>
        <taxon>Debaryomycetaceae</taxon>
        <taxon>Scheffersomyces</taxon>
    </lineage>
</organism>
<sequence length="390" mass="44461">MGVYIPPPNDNDSDKDKKKNKNNDNPNLNPEPSGDSKKVNNVIKGVSSTSPPGTTTYYIPNPSTWIPHNPSAGLIWGPLTPSSDNRPALYGMVGLQFILGLGFFRAARQLYRPRTIVTSVNSIPQHFTPKGSFWKASIPALTGAVAIYGCGLELSRLMLAYDPWYEEAKYYRRVAIKNGDKPSAWFGAYDYYKPMSTKAWIDKVGIWIKATEHELSEKQEVLDVSIVQANSSNPDDKGHVEHVLIPVKKNNLMSQMNKKGKYVEIYNRLRESNKSRYRTLLDTDLKDVQELNKAERIDLILEGKSPYSNPEYTKPHIQLGNHHVDTDDEFEMVWLNFEPWDELKLETDYDIRLIPHWRWADSDNSEPELDAVEQQHNHSISEAESSKELV</sequence>
<gene>
    <name type="primary">MGR1</name>
    <name type="ORF">PICST_40521</name>
</gene>
<accession>A3LN78</accession>
<feature type="chain" id="PRO_0000324415" description="Mitochondrial genome required protein 1">
    <location>
        <begin position="1"/>
        <end position="390"/>
    </location>
</feature>
<feature type="topological domain" description="Mitochondrial intermembrane" evidence="1">
    <location>
        <begin position="1"/>
        <end position="87"/>
    </location>
</feature>
<feature type="transmembrane region" description="Helical" evidence="2">
    <location>
        <begin position="88"/>
        <end position="104"/>
    </location>
</feature>
<feature type="topological domain" description="Mitochondrial matrix" evidence="1">
    <location>
        <begin position="105"/>
        <end position="135"/>
    </location>
</feature>
<feature type="transmembrane region" description="Helical" evidence="2">
    <location>
        <begin position="136"/>
        <end position="152"/>
    </location>
</feature>
<feature type="topological domain" description="Mitochondrial intermembrane" evidence="1">
    <location>
        <begin position="153"/>
        <end position="390"/>
    </location>
</feature>
<feature type="region of interest" description="Disordered" evidence="3">
    <location>
        <begin position="1"/>
        <end position="55"/>
    </location>
</feature>
<feature type="region of interest" description="Disordered" evidence="3">
    <location>
        <begin position="365"/>
        <end position="390"/>
    </location>
</feature>
<feature type="compositionally biased region" description="Basic and acidic residues" evidence="3">
    <location>
        <begin position="373"/>
        <end position="390"/>
    </location>
</feature>
<evidence type="ECO:0000250" key="1"/>
<evidence type="ECO:0000255" key="2"/>
<evidence type="ECO:0000256" key="3">
    <source>
        <dbReference type="SAM" id="MobiDB-lite"/>
    </source>
</evidence>
<evidence type="ECO:0000305" key="4"/>
<protein>
    <recommendedName>
        <fullName>Mitochondrial genome required protein 1</fullName>
    </recommendedName>
</protein>
<reference key="1">
    <citation type="journal article" date="2007" name="Nat. Biotechnol.">
        <title>Genome sequence of the lignocellulose-bioconverting and xylose-fermenting yeast Pichia stipitis.</title>
        <authorList>
            <person name="Jeffries T.W."/>
            <person name="Grigoriev I.V."/>
            <person name="Grimwood J."/>
            <person name="Laplaza J.M."/>
            <person name="Aerts A."/>
            <person name="Salamov A."/>
            <person name="Schmutz J."/>
            <person name="Lindquist E."/>
            <person name="Dehal P."/>
            <person name="Shapiro H."/>
            <person name="Jin Y.-S."/>
            <person name="Passoth V."/>
            <person name="Richardson P.M."/>
        </authorList>
    </citation>
    <scope>NUCLEOTIDE SEQUENCE [LARGE SCALE GENOMIC DNA]</scope>
    <source>
        <strain>ATCC 58785 / CBS 6054 / NBRC 10063 / NRRL Y-11545</strain>
    </source>
</reference>
<keyword id="KW-0472">Membrane</keyword>
<keyword id="KW-0496">Mitochondrion</keyword>
<keyword id="KW-0999">Mitochondrion inner membrane</keyword>
<keyword id="KW-1185">Reference proteome</keyword>
<keyword id="KW-0812">Transmembrane</keyword>
<keyword id="KW-1133">Transmembrane helix</keyword>
<comment type="function">
    <text evidence="1">Component of the mitochondrial inner membrane i-AAA protease complex required for mitochondrial inner membrane protein turnover.</text>
</comment>
<comment type="subunit">
    <text evidence="1">Component of the mitochondrial inner membrane i-AAA protease complex.</text>
</comment>
<comment type="subcellular location">
    <subcellularLocation>
        <location evidence="1">Mitochondrion inner membrane</location>
        <topology evidence="1">Multi-pass membrane protein</topology>
    </subcellularLocation>
</comment>
<comment type="similarity">
    <text evidence="4">Belongs to the MGR1 family.</text>
</comment>
<comment type="sequence caution" evidence="4">
    <conflict type="erroneous gene model prediction">
        <sequence resource="EMBL-CDS" id="ABN64284"/>
    </conflict>
</comment>
<proteinExistence type="inferred from homology"/>
<dbReference type="EMBL" id="CP000496">
    <property type="protein sequence ID" value="ABN64284.1"/>
    <property type="status" value="ALT_SEQ"/>
    <property type="molecule type" value="Genomic_DNA"/>
</dbReference>
<dbReference type="RefSeq" id="XP_001382313.1">
    <property type="nucleotide sequence ID" value="XM_001382276.1"/>
</dbReference>
<dbReference type="FunCoup" id="A3LN78">
    <property type="interactions" value="36"/>
</dbReference>
<dbReference type="STRING" id="322104.A3LN78"/>
<dbReference type="GeneID" id="4836728"/>
<dbReference type="KEGG" id="pic:PICST_40521"/>
<dbReference type="eggNOG" id="ENOG502QR67">
    <property type="taxonomic scope" value="Eukaryota"/>
</dbReference>
<dbReference type="HOGENOM" id="CLU_871878_0_0_1"/>
<dbReference type="InParanoid" id="A3LN78"/>
<dbReference type="OrthoDB" id="4087899at2759"/>
<dbReference type="Proteomes" id="UP000002258">
    <property type="component" value="Chromosome 2"/>
</dbReference>
<dbReference type="GO" id="GO:0005743">
    <property type="term" value="C:mitochondrial inner membrane"/>
    <property type="evidence" value="ECO:0007669"/>
    <property type="project" value="UniProtKB-SubCell"/>
</dbReference>
<dbReference type="InterPro" id="IPR013911">
    <property type="entry name" value="i-AAA_Mgr1"/>
</dbReference>
<dbReference type="Pfam" id="PF08602">
    <property type="entry name" value="Mgr1"/>
    <property type="match status" value="1"/>
</dbReference>